<dbReference type="EMBL" id="CP000577">
    <property type="protein sequence ID" value="ABN75459.1"/>
    <property type="molecule type" value="Genomic_DNA"/>
</dbReference>
<dbReference type="EMBL" id="CP000577">
    <property type="protein sequence ID" value="ABN75473.1"/>
    <property type="molecule type" value="Genomic_DNA"/>
</dbReference>
<dbReference type="SMR" id="A3PGJ3"/>
<dbReference type="KEGG" id="rsh:Rsph17029_0343"/>
<dbReference type="KEGG" id="rsh:Rsph17029_0357"/>
<dbReference type="HOGENOM" id="CLU_072226_1_1_5"/>
<dbReference type="GO" id="GO:0015935">
    <property type="term" value="C:small ribosomal subunit"/>
    <property type="evidence" value="ECO:0007669"/>
    <property type="project" value="InterPro"/>
</dbReference>
<dbReference type="GO" id="GO:0019843">
    <property type="term" value="F:rRNA binding"/>
    <property type="evidence" value="ECO:0007669"/>
    <property type="project" value="UniProtKB-UniRule"/>
</dbReference>
<dbReference type="GO" id="GO:0003735">
    <property type="term" value="F:structural constituent of ribosome"/>
    <property type="evidence" value="ECO:0007669"/>
    <property type="project" value="InterPro"/>
</dbReference>
<dbReference type="GO" id="GO:0000049">
    <property type="term" value="F:tRNA binding"/>
    <property type="evidence" value="ECO:0007669"/>
    <property type="project" value="UniProtKB-UniRule"/>
</dbReference>
<dbReference type="GO" id="GO:0006412">
    <property type="term" value="P:translation"/>
    <property type="evidence" value="ECO:0007669"/>
    <property type="project" value="UniProtKB-UniRule"/>
</dbReference>
<dbReference type="CDD" id="cd14869">
    <property type="entry name" value="uS7_Bacteria"/>
    <property type="match status" value="1"/>
</dbReference>
<dbReference type="FunFam" id="1.10.455.10:FF:000001">
    <property type="entry name" value="30S ribosomal protein S7"/>
    <property type="match status" value="1"/>
</dbReference>
<dbReference type="Gene3D" id="1.10.455.10">
    <property type="entry name" value="Ribosomal protein S7 domain"/>
    <property type="match status" value="1"/>
</dbReference>
<dbReference type="HAMAP" id="MF_00480_B">
    <property type="entry name" value="Ribosomal_uS7_B"/>
    <property type="match status" value="1"/>
</dbReference>
<dbReference type="InterPro" id="IPR000235">
    <property type="entry name" value="Ribosomal_uS7"/>
</dbReference>
<dbReference type="InterPro" id="IPR005717">
    <property type="entry name" value="Ribosomal_uS7_bac/org-type"/>
</dbReference>
<dbReference type="InterPro" id="IPR020606">
    <property type="entry name" value="Ribosomal_uS7_CS"/>
</dbReference>
<dbReference type="InterPro" id="IPR023798">
    <property type="entry name" value="Ribosomal_uS7_dom"/>
</dbReference>
<dbReference type="InterPro" id="IPR036823">
    <property type="entry name" value="Ribosomal_uS7_dom_sf"/>
</dbReference>
<dbReference type="NCBIfam" id="TIGR01029">
    <property type="entry name" value="rpsG_bact"/>
    <property type="match status" value="1"/>
</dbReference>
<dbReference type="PANTHER" id="PTHR11205">
    <property type="entry name" value="RIBOSOMAL PROTEIN S7"/>
    <property type="match status" value="1"/>
</dbReference>
<dbReference type="Pfam" id="PF00177">
    <property type="entry name" value="Ribosomal_S7"/>
    <property type="match status" value="1"/>
</dbReference>
<dbReference type="PIRSF" id="PIRSF002122">
    <property type="entry name" value="RPS7p_RPS7a_RPS5e_RPS7o"/>
    <property type="match status" value="1"/>
</dbReference>
<dbReference type="SUPFAM" id="SSF47973">
    <property type="entry name" value="Ribosomal protein S7"/>
    <property type="match status" value="1"/>
</dbReference>
<dbReference type="PROSITE" id="PS00052">
    <property type="entry name" value="RIBOSOMAL_S7"/>
    <property type="match status" value="1"/>
</dbReference>
<organism>
    <name type="scientific">Cereibacter sphaeroides (strain ATCC 17029 / ATH 2.4.9)</name>
    <name type="common">Rhodobacter sphaeroides</name>
    <dbReference type="NCBI Taxonomy" id="349101"/>
    <lineage>
        <taxon>Bacteria</taxon>
        <taxon>Pseudomonadati</taxon>
        <taxon>Pseudomonadota</taxon>
        <taxon>Alphaproteobacteria</taxon>
        <taxon>Rhodobacterales</taxon>
        <taxon>Paracoccaceae</taxon>
        <taxon>Cereibacter</taxon>
    </lineage>
</organism>
<comment type="function">
    <text evidence="1">One of the primary rRNA binding proteins, it binds directly to 16S rRNA where it nucleates assembly of the head domain of the 30S subunit. Is located at the subunit interface close to the decoding center, probably blocks exit of the E-site tRNA.</text>
</comment>
<comment type="subunit">
    <text evidence="1">Part of the 30S ribosomal subunit. Contacts proteins S9 and S11.</text>
</comment>
<comment type="similarity">
    <text evidence="1">Belongs to the universal ribosomal protein uS7 family.</text>
</comment>
<protein>
    <recommendedName>
        <fullName evidence="2">Small ribosomal subunit protein uS7A/uS7B</fullName>
    </recommendedName>
    <alternativeName>
        <fullName evidence="1">30S ribosomal protein S7</fullName>
    </alternativeName>
</protein>
<sequence>MSRRHAAEKREILPDAKFGDTVLTKFMNNLMIDGKKSVAESIVYNALDRVQTRLKREPLEAFHEALDNVKPSVEVRSRRVGGATYQVPVEVRTERREALAIRWLITAARKRNENTMEERLAAELADACNNRGTAVKKREDTHKMADANKAFSHYRW</sequence>
<gene>
    <name evidence="1" type="primary">rpsG1</name>
    <name type="ordered locus">Rsph17029_0343</name>
</gene>
<gene>
    <name evidence="1" type="primary">rpsG2</name>
    <name type="ordered locus">Rsph17029_0357</name>
</gene>
<reference key="1">
    <citation type="submission" date="2007-02" db="EMBL/GenBank/DDBJ databases">
        <title>Complete sequence of chromosome 1 of Rhodobacter sphaeroides ATCC 17029.</title>
        <authorList>
            <person name="Copeland A."/>
            <person name="Lucas S."/>
            <person name="Lapidus A."/>
            <person name="Barry K."/>
            <person name="Detter J.C."/>
            <person name="Glavina del Rio T."/>
            <person name="Hammon N."/>
            <person name="Israni S."/>
            <person name="Dalin E."/>
            <person name="Tice H."/>
            <person name="Pitluck S."/>
            <person name="Kiss H."/>
            <person name="Brettin T."/>
            <person name="Bruce D."/>
            <person name="Han C."/>
            <person name="Tapia R."/>
            <person name="Gilna P."/>
            <person name="Schmutz J."/>
            <person name="Larimer F."/>
            <person name="Land M."/>
            <person name="Hauser L."/>
            <person name="Kyrpides N."/>
            <person name="Mikhailova N."/>
            <person name="Richardson P."/>
            <person name="Mackenzie C."/>
            <person name="Choudhary M."/>
            <person name="Donohue T.J."/>
            <person name="Kaplan S."/>
        </authorList>
    </citation>
    <scope>NUCLEOTIDE SEQUENCE [LARGE SCALE GENOMIC DNA]</scope>
    <source>
        <strain>ATCC 17029 / ATH 2.4.9</strain>
    </source>
</reference>
<feature type="chain" id="PRO_0000344303" description="Small ribosomal subunit protein uS7A/uS7B">
    <location>
        <begin position="1"/>
        <end position="156"/>
    </location>
</feature>
<accession>A3PGJ3</accession>
<evidence type="ECO:0000255" key="1">
    <source>
        <dbReference type="HAMAP-Rule" id="MF_00480"/>
    </source>
</evidence>
<evidence type="ECO:0000305" key="2"/>
<keyword id="KW-0687">Ribonucleoprotein</keyword>
<keyword id="KW-0689">Ribosomal protein</keyword>
<keyword id="KW-0694">RNA-binding</keyword>
<keyword id="KW-0699">rRNA-binding</keyword>
<keyword id="KW-0820">tRNA-binding</keyword>
<name>RS7_CERS1</name>
<proteinExistence type="inferred from homology"/>